<reference key="1">
    <citation type="submission" date="2006-08" db="EMBL/GenBank/DDBJ databases">
        <title>Complete sequence of Maricaulis maris MCS10.</title>
        <authorList>
            <consortium name="US DOE Joint Genome Institute"/>
            <person name="Copeland A."/>
            <person name="Lucas S."/>
            <person name="Lapidus A."/>
            <person name="Barry K."/>
            <person name="Detter J.C."/>
            <person name="Glavina del Rio T."/>
            <person name="Hammon N."/>
            <person name="Israni S."/>
            <person name="Dalin E."/>
            <person name="Tice H."/>
            <person name="Pitluck S."/>
            <person name="Saunders E."/>
            <person name="Brettin T."/>
            <person name="Bruce D."/>
            <person name="Han C."/>
            <person name="Tapia R."/>
            <person name="Gilna P."/>
            <person name="Schmutz J."/>
            <person name="Larimer F."/>
            <person name="Land M."/>
            <person name="Hauser L."/>
            <person name="Kyrpides N."/>
            <person name="Mikhailova N."/>
            <person name="Viollier P."/>
            <person name="Stephens C."/>
            <person name="Richardson P."/>
        </authorList>
    </citation>
    <scope>NUCLEOTIDE SEQUENCE [LARGE SCALE GENOMIC DNA]</scope>
    <source>
        <strain>MCS10</strain>
    </source>
</reference>
<keyword id="KW-0963">Cytoplasm</keyword>
<keyword id="KW-0238">DNA-binding</keyword>
<keyword id="KW-1185">Reference proteome</keyword>
<keyword id="KW-0804">Transcription</keyword>
<keyword id="KW-0805">Transcription regulation</keyword>
<name>Y2433_MARMM</name>
<protein>
    <recommendedName>
        <fullName evidence="1">Probable transcriptional regulatory protein Mmar10_2433</fullName>
    </recommendedName>
</protein>
<accession>Q0ALW8</accession>
<sequence>MAGHSKWANIQHRKGRQDKLRSKLFSRLSKEISIAAKLGGPDVDANPRLRLAVSNAKGQSMPKDNIQRAIDKASGGDDESFEDIRYEGFGPAGIGVIVEVSTDNKNRAAAEVRTAFAKNGGNLGETGSVAFMFDNVGEIRYPLSKADEDTMMEAAIEAGAEDVASEPGDEDNEGEHVIYTAREDLMEVVGGLSATFEDPSSAKLIWRPQNLIEVTGDKVATLMKMMEMLEDSDDVQNVYANFDISDEDMAQLD</sequence>
<comment type="subcellular location">
    <subcellularLocation>
        <location evidence="1">Cytoplasm</location>
    </subcellularLocation>
</comment>
<comment type="similarity">
    <text evidence="1">Belongs to the TACO1 family.</text>
</comment>
<dbReference type="EMBL" id="CP000449">
    <property type="protein sequence ID" value="ABI66725.1"/>
    <property type="molecule type" value="Genomic_DNA"/>
</dbReference>
<dbReference type="RefSeq" id="WP_011644370.1">
    <property type="nucleotide sequence ID" value="NC_008347.1"/>
</dbReference>
<dbReference type="SMR" id="Q0ALW8"/>
<dbReference type="STRING" id="394221.Mmar10_2433"/>
<dbReference type="KEGG" id="mmr:Mmar10_2433"/>
<dbReference type="eggNOG" id="COG0217">
    <property type="taxonomic scope" value="Bacteria"/>
</dbReference>
<dbReference type="HOGENOM" id="CLU_062974_2_2_5"/>
<dbReference type="OrthoDB" id="9781053at2"/>
<dbReference type="Proteomes" id="UP000001964">
    <property type="component" value="Chromosome"/>
</dbReference>
<dbReference type="GO" id="GO:0005829">
    <property type="term" value="C:cytosol"/>
    <property type="evidence" value="ECO:0007669"/>
    <property type="project" value="TreeGrafter"/>
</dbReference>
<dbReference type="GO" id="GO:0003677">
    <property type="term" value="F:DNA binding"/>
    <property type="evidence" value="ECO:0007669"/>
    <property type="project" value="UniProtKB-UniRule"/>
</dbReference>
<dbReference type="GO" id="GO:0006355">
    <property type="term" value="P:regulation of DNA-templated transcription"/>
    <property type="evidence" value="ECO:0007669"/>
    <property type="project" value="UniProtKB-UniRule"/>
</dbReference>
<dbReference type="FunFam" id="1.10.10.200:FF:000002">
    <property type="entry name" value="Probable transcriptional regulatory protein CLM62_37755"/>
    <property type="match status" value="1"/>
</dbReference>
<dbReference type="Gene3D" id="1.10.10.200">
    <property type="match status" value="1"/>
</dbReference>
<dbReference type="Gene3D" id="3.30.70.980">
    <property type="match status" value="2"/>
</dbReference>
<dbReference type="HAMAP" id="MF_00693">
    <property type="entry name" value="Transcrip_reg_TACO1"/>
    <property type="match status" value="1"/>
</dbReference>
<dbReference type="InterPro" id="IPR017856">
    <property type="entry name" value="Integrase-like_N"/>
</dbReference>
<dbReference type="InterPro" id="IPR048300">
    <property type="entry name" value="TACO1_YebC-like_2nd/3rd_dom"/>
</dbReference>
<dbReference type="InterPro" id="IPR049083">
    <property type="entry name" value="TACO1_YebC_N"/>
</dbReference>
<dbReference type="InterPro" id="IPR002876">
    <property type="entry name" value="Transcrip_reg_TACO1-like"/>
</dbReference>
<dbReference type="InterPro" id="IPR026564">
    <property type="entry name" value="Transcrip_reg_TACO1-like_dom3"/>
</dbReference>
<dbReference type="InterPro" id="IPR029072">
    <property type="entry name" value="YebC-like"/>
</dbReference>
<dbReference type="NCBIfam" id="NF001030">
    <property type="entry name" value="PRK00110.1"/>
    <property type="match status" value="1"/>
</dbReference>
<dbReference type="NCBIfam" id="NF009044">
    <property type="entry name" value="PRK12378.1"/>
    <property type="match status" value="1"/>
</dbReference>
<dbReference type="NCBIfam" id="TIGR01033">
    <property type="entry name" value="YebC/PmpR family DNA-binding transcriptional regulator"/>
    <property type="match status" value="1"/>
</dbReference>
<dbReference type="PANTHER" id="PTHR12532:SF6">
    <property type="entry name" value="TRANSCRIPTIONAL REGULATORY PROTEIN YEBC-RELATED"/>
    <property type="match status" value="1"/>
</dbReference>
<dbReference type="PANTHER" id="PTHR12532">
    <property type="entry name" value="TRANSLATIONAL ACTIVATOR OF CYTOCHROME C OXIDASE 1"/>
    <property type="match status" value="1"/>
</dbReference>
<dbReference type="Pfam" id="PF20772">
    <property type="entry name" value="TACO1_YebC_N"/>
    <property type="match status" value="1"/>
</dbReference>
<dbReference type="Pfam" id="PF01709">
    <property type="entry name" value="Transcrip_reg"/>
    <property type="match status" value="1"/>
</dbReference>
<dbReference type="SUPFAM" id="SSF75625">
    <property type="entry name" value="YebC-like"/>
    <property type="match status" value="1"/>
</dbReference>
<organism>
    <name type="scientific">Maricaulis maris (strain MCS10)</name>
    <name type="common">Caulobacter maris</name>
    <dbReference type="NCBI Taxonomy" id="394221"/>
    <lineage>
        <taxon>Bacteria</taxon>
        <taxon>Pseudomonadati</taxon>
        <taxon>Pseudomonadota</taxon>
        <taxon>Alphaproteobacteria</taxon>
        <taxon>Maricaulales</taxon>
        <taxon>Maricaulaceae</taxon>
        <taxon>Maricaulis</taxon>
    </lineage>
</organism>
<evidence type="ECO:0000255" key="1">
    <source>
        <dbReference type="HAMAP-Rule" id="MF_00693"/>
    </source>
</evidence>
<gene>
    <name type="ordered locus">Mmar10_2433</name>
</gene>
<feature type="chain" id="PRO_1000045334" description="Probable transcriptional regulatory protein Mmar10_2433">
    <location>
        <begin position="1"/>
        <end position="253"/>
    </location>
</feature>
<proteinExistence type="inferred from homology"/>